<feature type="chain" id="PRO_0000277441" description="Probable sulfate transport system permease protein cysT">
    <location>
        <begin position="1"/>
        <end position="284"/>
    </location>
</feature>
<feature type="transmembrane region" description="Helical" evidence="2">
    <location>
        <begin position="25"/>
        <end position="45"/>
    </location>
</feature>
<feature type="transmembrane region" description="Helical" evidence="2">
    <location>
        <begin position="75"/>
        <end position="95"/>
    </location>
</feature>
<feature type="transmembrane region" description="Helical" evidence="2">
    <location>
        <begin position="107"/>
        <end position="127"/>
    </location>
</feature>
<feature type="transmembrane region" description="Helical" evidence="2">
    <location>
        <begin position="145"/>
        <end position="165"/>
    </location>
</feature>
<feature type="transmembrane region" description="Helical" evidence="2">
    <location>
        <begin position="194"/>
        <end position="214"/>
    </location>
</feature>
<feature type="transmembrane region" description="Helical" evidence="2">
    <location>
        <begin position="223"/>
        <end position="243"/>
    </location>
</feature>
<feature type="transmembrane region" description="Helical" evidence="2">
    <location>
        <begin position="255"/>
        <end position="275"/>
    </location>
</feature>
<feature type="domain" description="ABC transmembrane type-1" evidence="2">
    <location>
        <begin position="69"/>
        <end position="272"/>
    </location>
</feature>
<reference key="1">
    <citation type="journal article" date="1999" name="Proc. Natl. Acad. Sci. U.S.A.">
        <title>The complete chloroplast DNA sequence of the green alga Nephroselmis olivacea: insights into the architecture of ancestral chloroplast genomes.</title>
        <authorList>
            <person name="Turmel M."/>
            <person name="Otis C."/>
            <person name="Lemieux C."/>
        </authorList>
    </citation>
    <scope>NUCLEOTIDE SEQUENCE [LARGE SCALE GENOMIC DNA]</scope>
    <source>
        <strain>NIES-484 / S-N-5-8</strain>
    </source>
</reference>
<name>CYST_NEPOL</name>
<proteinExistence type="inferred from homology"/>
<geneLocation type="chloroplast"/>
<keyword id="KW-0150">Chloroplast</keyword>
<keyword id="KW-0472">Membrane</keyword>
<keyword id="KW-0934">Plastid</keyword>
<keyword id="KW-0764">Sulfate transport</keyword>
<keyword id="KW-0812">Transmembrane</keyword>
<keyword id="KW-1133">Transmembrane helix</keyword>
<keyword id="KW-0813">Transport</keyword>
<dbReference type="EMBL" id="AF137379">
    <property type="protein sequence ID" value="AAD54899.1"/>
    <property type="molecule type" value="Genomic_DNA"/>
</dbReference>
<dbReference type="RefSeq" id="NP_050928.1">
    <property type="nucleotide sequence ID" value="NC_000927.1"/>
</dbReference>
<dbReference type="SMR" id="Q9TKU8"/>
<dbReference type="GeneID" id="801934"/>
<dbReference type="GO" id="GO:0031969">
    <property type="term" value="C:chloroplast membrane"/>
    <property type="evidence" value="ECO:0007669"/>
    <property type="project" value="UniProtKB-SubCell"/>
</dbReference>
<dbReference type="GO" id="GO:0005886">
    <property type="term" value="C:plasma membrane"/>
    <property type="evidence" value="ECO:0007669"/>
    <property type="project" value="InterPro"/>
</dbReference>
<dbReference type="GO" id="GO:0015419">
    <property type="term" value="F:ABC-type sulfate transporter activity"/>
    <property type="evidence" value="ECO:0007669"/>
    <property type="project" value="InterPro"/>
</dbReference>
<dbReference type="CDD" id="cd06261">
    <property type="entry name" value="TM_PBP2"/>
    <property type="match status" value="1"/>
</dbReference>
<dbReference type="FunFam" id="1.10.3720.10:FF:000004">
    <property type="entry name" value="Sulfate transport system permease protein CysT"/>
    <property type="match status" value="1"/>
</dbReference>
<dbReference type="Gene3D" id="1.10.3720.10">
    <property type="entry name" value="MetI-like"/>
    <property type="match status" value="1"/>
</dbReference>
<dbReference type="InterPro" id="IPR011865">
    <property type="entry name" value="CysT_permease"/>
</dbReference>
<dbReference type="InterPro" id="IPR000515">
    <property type="entry name" value="MetI-like"/>
</dbReference>
<dbReference type="InterPro" id="IPR035906">
    <property type="entry name" value="MetI-like_sf"/>
</dbReference>
<dbReference type="InterPro" id="IPR005667">
    <property type="entry name" value="Sulph_transpt2"/>
</dbReference>
<dbReference type="NCBIfam" id="TIGR00969">
    <property type="entry name" value="3a0106s02"/>
    <property type="match status" value="1"/>
</dbReference>
<dbReference type="NCBIfam" id="TIGR02139">
    <property type="entry name" value="permease_CysT"/>
    <property type="match status" value="1"/>
</dbReference>
<dbReference type="PANTHER" id="PTHR30406">
    <property type="entry name" value="SULFATE TRANSPORT SYSTEM PERMEASE PROTEIN"/>
    <property type="match status" value="1"/>
</dbReference>
<dbReference type="PANTHER" id="PTHR30406:SF8">
    <property type="entry name" value="SULFATE TRANSPORT SYSTEM PERMEASE PROTEIN CYST"/>
    <property type="match status" value="1"/>
</dbReference>
<dbReference type="Pfam" id="PF00528">
    <property type="entry name" value="BPD_transp_1"/>
    <property type="match status" value="1"/>
</dbReference>
<dbReference type="SUPFAM" id="SSF161098">
    <property type="entry name" value="MetI-like"/>
    <property type="match status" value="1"/>
</dbReference>
<dbReference type="PROSITE" id="PS50928">
    <property type="entry name" value="ABC_TM1"/>
    <property type="match status" value="1"/>
</dbReference>
<organism>
    <name type="scientific">Nephroselmis olivacea</name>
    <name type="common">Green alga</name>
    <dbReference type="NCBI Taxonomy" id="31312"/>
    <lineage>
        <taxon>Eukaryota</taxon>
        <taxon>Viridiplantae</taxon>
        <taxon>Chlorophyta</taxon>
        <taxon>Nephroselmidophyceae</taxon>
        <taxon>Nephroselmidales</taxon>
        <taxon>Nephroselmidaceae</taxon>
        <taxon>Nephroselmis</taxon>
    </lineage>
</organism>
<comment type="function">
    <text evidence="1">Part of the ABC transporter complex cysAWTP (TC 3.A.1.6.1) involved in sulfate/thiosulfate import. Probably responsible for the translocation of the substrate across the membrane (By similarity).</text>
</comment>
<comment type="subcellular location">
    <subcellularLocation>
        <location evidence="3">Plastid</location>
        <location evidence="3">Chloroplast membrane</location>
        <topology evidence="3">Multi-pass membrane protein</topology>
    </subcellularLocation>
</comment>
<comment type="similarity">
    <text evidence="3">Belongs to the binding-protein-dependent transport system permease family. CysTW subfamily.</text>
</comment>
<evidence type="ECO:0000250" key="1"/>
<evidence type="ECO:0000255" key="2">
    <source>
        <dbReference type="PROSITE-ProRule" id="PRU00441"/>
    </source>
</evidence>
<evidence type="ECO:0000305" key="3"/>
<accession>Q9TKU8</accession>
<protein>
    <recommendedName>
        <fullName>Probable sulfate transport system permease protein cysT</fullName>
    </recommendedName>
</protein>
<gene>
    <name type="primary">cysT</name>
</gene>
<sequence>MFDPKSLDSGSRSILTMKNRLVSWAWALTLMYMLVSLILPIGALLQKSSQESVSEFVSIATAPVAMSAYAVTLSSALIAALLNGVFGLLIAWVLVRYEFPGRRLLDAAVDLPFALPTSVAGLTLATVYSDQGWIGTWLSSLNIQVAFTRLGVMLAMLFVSFPFVVRTLQPVLQDMERELEEAAWSLGASPFNTFLRVLCPPLMPAMMTGIALAFSRAVGEYGSVVIVSGNIPFQDLIAPVLIFQRLEQYDYSGATVIGTVVLLISLTLLLAINWIQASNRKFLG</sequence>